<name>RL21_SACI4</name>
<reference key="1">
    <citation type="journal article" date="2009" name="Proc. Natl. Acad. Sci. U.S.A.">
        <title>Biogeography of the Sulfolobus islandicus pan-genome.</title>
        <authorList>
            <person name="Reno M.L."/>
            <person name="Held N.L."/>
            <person name="Fields C.J."/>
            <person name="Burke P.V."/>
            <person name="Whitaker R.J."/>
        </authorList>
    </citation>
    <scope>NUCLEOTIDE SEQUENCE [LARGE SCALE GENOMIC DNA]</scope>
    <source>
        <strain>M.14.25 / Kamchatka #1</strain>
    </source>
</reference>
<keyword id="KW-0687">Ribonucleoprotein</keyword>
<keyword id="KW-0689">Ribosomal protein</keyword>
<comment type="similarity">
    <text evidence="1">Belongs to the eukaryotic ribosomal protein eL21 family.</text>
</comment>
<proteinExistence type="inferred from homology"/>
<gene>
    <name evidence="1" type="primary">rpl21e</name>
    <name type="ordered locus">M1425_1390</name>
</gene>
<accession>C3MVE8</accession>
<protein>
    <recommendedName>
        <fullName evidence="1">Large ribosomal subunit protein eL21</fullName>
    </recommendedName>
    <alternativeName>
        <fullName evidence="3">50S ribosomal protein L21e</fullName>
    </alternativeName>
</protein>
<sequence length="101" mass="11383">MVKHSRGYRTRSRSLLRKSPRERGAVPSLSRLMVEYKEGDKVVIKINPSVHSGMPHRRYQGKVGKIIGKRGRAYLVSVTLGDKEKVIIVRPEHLVSFSSSG</sequence>
<feature type="chain" id="PRO_1000205576" description="Large ribosomal subunit protein eL21">
    <location>
        <begin position="1"/>
        <end position="101"/>
    </location>
</feature>
<feature type="region of interest" description="Disordered" evidence="2">
    <location>
        <begin position="1"/>
        <end position="23"/>
    </location>
</feature>
<feature type="compositionally biased region" description="Basic residues" evidence="2">
    <location>
        <begin position="1"/>
        <end position="18"/>
    </location>
</feature>
<organism>
    <name type="scientific">Saccharolobus islandicus (strain M.14.25 / Kamchatka #1)</name>
    <name type="common">Sulfolobus islandicus</name>
    <dbReference type="NCBI Taxonomy" id="427317"/>
    <lineage>
        <taxon>Archaea</taxon>
        <taxon>Thermoproteota</taxon>
        <taxon>Thermoprotei</taxon>
        <taxon>Sulfolobales</taxon>
        <taxon>Sulfolobaceae</taxon>
        <taxon>Saccharolobus</taxon>
    </lineage>
</organism>
<evidence type="ECO:0000255" key="1">
    <source>
        <dbReference type="HAMAP-Rule" id="MF_00369"/>
    </source>
</evidence>
<evidence type="ECO:0000256" key="2">
    <source>
        <dbReference type="SAM" id="MobiDB-lite"/>
    </source>
</evidence>
<evidence type="ECO:0000305" key="3"/>
<dbReference type="EMBL" id="CP001400">
    <property type="protein sequence ID" value="ACP38143.1"/>
    <property type="molecule type" value="Genomic_DNA"/>
</dbReference>
<dbReference type="RefSeq" id="WP_012711388.1">
    <property type="nucleotide sequence ID" value="NC_012588.1"/>
</dbReference>
<dbReference type="SMR" id="C3MVE8"/>
<dbReference type="KEGG" id="sia:M1425_1390"/>
<dbReference type="HOGENOM" id="CLU_103610_1_1_2"/>
<dbReference type="Proteomes" id="UP000001350">
    <property type="component" value="Chromosome"/>
</dbReference>
<dbReference type="GO" id="GO:1990904">
    <property type="term" value="C:ribonucleoprotein complex"/>
    <property type="evidence" value="ECO:0007669"/>
    <property type="project" value="UniProtKB-KW"/>
</dbReference>
<dbReference type="GO" id="GO:0005840">
    <property type="term" value="C:ribosome"/>
    <property type="evidence" value="ECO:0007669"/>
    <property type="project" value="UniProtKB-KW"/>
</dbReference>
<dbReference type="GO" id="GO:0003735">
    <property type="term" value="F:structural constituent of ribosome"/>
    <property type="evidence" value="ECO:0007669"/>
    <property type="project" value="InterPro"/>
</dbReference>
<dbReference type="GO" id="GO:0006412">
    <property type="term" value="P:translation"/>
    <property type="evidence" value="ECO:0007669"/>
    <property type="project" value="UniProtKB-UniRule"/>
</dbReference>
<dbReference type="FunFam" id="2.30.30.70:FF:000001">
    <property type="entry name" value="60S ribosomal protein L21"/>
    <property type="match status" value="1"/>
</dbReference>
<dbReference type="Gene3D" id="2.30.30.70">
    <property type="entry name" value="Ribosomal protein L21"/>
    <property type="match status" value="1"/>
</dbReference>
<dbReference type="HAMAP" id="MF_00369">
    <property type="entry name" value="Ribosomal_eL21"/>
    <property type="match status" value="1"/>
</dbReference>
<dbReference type="InterPro" id="IPR001147">
    <property type="entry name" value="Ribosomal_eL21"/>
</dbReference>
<dbReference type="InterPro" id="IPR022856">
    <property type="entry name" value="Ribosomal_eL21_arc"/>
</dbReference>
<dbReference type="InterPro" id="IPR018259">
    <property type="entry name" value="Ribosomal_eL21_CS"/>
</dbReference>
<dbReference type="InterPro" id="IPR036948">
    <property type="entry name" value="Ribosomal_eL21_sf"/>
</dbReference>
<dbReference type="InterPro" id="IPR008991">
    <property type="entry name" value="Translation_prot_SH3-like_sf"/>
</dbReference>
<dbReference type="NCBIfam" id="NF003303">
    <property type="entry name" value="PRK04306.1"/>
    <property type="match status" value="1"/>
</dbReference>
<dbReference type="PANTHER" id="PTHR20981">
    <property type="entry name" value="60S RIBOSOMAL PROTEIN L21"/>
    <property type="match status" value="1"/>
</dbReference>
<dbReference type="Pfam" id="PF01157">
    <property type="entry name" value="Ribosomal_L21e"/>
    <property type="match status" value="1"/>
</dbReference>
<dbReference type="SUPFAM" id="SSF50104">
    <property type="entry name" value="Translation proteins SH3-like domain"/>
    <property type="match status" value="1"/>
</dbReference>
<dbReference type="PROSITE" id="PS01171">
    <property type="entry name" value="RIBOSOMAL_L21E"/>
    <property type="match status" value="1"/>
</dbReference>